<proteinExistence type="evidence at protein level"/>
<protein>
    <recommendedName>
        <fullName>Elongator complex protein 1</fullName>
        <shortName>ELP1</shortName>
    </recommendedName>
    <alternativeName>
        <fullName>IkappaB kinase complex-associated protein</fullName>
        <shortName>IKK complex-associated protein</shortName>
    </alternativeName>
</protein>
<dbReference type="EMBL" id="AF367244">
    <property type="protein sequence ID" value="AAL36025.1"/>
    <property type="status" value="ALT_FRAME"/>
    <property type="molecule type" value="mRNA"/>
</dbReference>
<dbReference type="EMBL" id="AF387811">
    <property type="protein sequence ID" value="AAL40925.1"/>
    <property type="molecule type" value="mRNA"/>
</dbReference>
<dbReference type="EMBL" id="AF140786">
    <property type="protein sequence ID" value="AAO15309.1"/>
    <property type="status" value="ALT_FRAME"/>
    <property type="molecule type" value="mRNA"/>
</dbReference>
<dbReference type="EMBL" id="AK004402">
    <property type="protein sequence ID" value="BAB23291.1"/>
    <property type="molecule type" value="mRNA"/>
</dbReference>
<dbReference type="EMBL" id="AK076152">
    <property type="protein sequence ID" value="BAC36221.1"/>
    <property type="molecule type" value="mRNA"/>
</dbReference>
<dbReference type="EMBL" id="AK035944">
    <property type="protein sequence ID" value="BAC29252.1"/>
    <property type="molecule type" value="mRNA"/>
</dbReference>
<dbReference type="EMBL" id="AK147153">
    <property type="protein sequence ID" value="BAE27720.1"/>
    <property type="molecule type" value="mRNA"/>
</dbReference>
<dbReference type="EMBL" id="AL807762">
    <property type="status" value="NOT_ANNOTATED_CDS"/>
    <property type="molecule type" value="Genomic_DNA"/>
</dbReference>
<dbReference type="EMBL" id="AL929577">
    <property type="status" value="NOT_ANNOTATED_CDS"/>
    <property type="molecule type" value="Genomic_DNA"/>
</dbReference>
<dbReference type="EMBL" id="BC052387">
    <property type="protein sequence ID" value="AAH52387.2"/>
    <property type="molecule type" value="mRNA"/>
</dbReference>
<dbReference type="EMBL" id="BC054468">
    <property type="protein sequence ID" value="AAH54468.1"/>
    <property type="molecule type" value="mRNA"/>
</dbReference>
<dbReference type="CCDS" id="CCDS38765.1"/>
<dbReference type="RefSeq" id="NP_080355.2">
    <property type="nucleotide sequence ID" value="NM_026079.3"/>
</dbReference>
<dbReference type="PDB" id="8AVG">
    <property type="method" value="EM"/>
    <property type="resolution" value="4.01 A"/>
    <property type="chains" value="A=1-1333"/>
</dbReference>
<dbReference type="PDBsum" id="8AVG"/>
<dbReference type="EMDB" id="EMD-15625"/>
<dbReference type="EMDB" id="EMD-15626"/>
<dbReference type="EMDB" id="EMD-15682"/>
<dbReference type="SMR" id="Q7TT37"/>
<dbReference type="BioGRID" id="230947">
    <property type="interactions" value="10"/>
</dbReference>
<dbReference type="FunCoup" id="Q7TT37">
    <property type="interactions" value="2785"/>
</dbReference>
<dbReference type="IntAct" id="Q7TT37">
    <property type="interactions" value="4"/>
</dbReference>
<dbReference type="MINT" id="Q7TT37"/>
<dbReference type="STRING" id="10090.ENSMUSP00000030140"/>
<dbReference type="GlyGen" id="Q7TT37">
    <property type="glycosylation" value="2 sites, 1 O-linked glycan (1 site)"/>
</dbReference>
<dbReference type="iPTMnet" id="Q7TT37"/>
<dbReference type="PhosphoSitePlus" id="Q7TT37"/>
<dbReference type="SwissPalm" id="Q7TT37"/>
<dbReference type="PaxDb" id="10090-ENSMUSP00000030140"/>
<dbReference type="PeptideAtlas" id="Q7TT37"/>
<dbReference type="ProteomicsDB" id="277853"/>
<dbReference type="Pumba" id="Q7TT37"/>
<dbReference type="Antibodypedia" id="14913">
    <property type="antibodies" value="277 antibodies from 32 providers"/>
</dbReference>
<dbReference type="DNASU" id="230233"/>
<dbReference type="Ensembl" id="ENSMUST00000030140.3">
    <property type="protein sequence ID" value="ENSMUSP00000030140.3"/>
    <property type="gene ID" value="ENSMUSG00000028431.12"/>
</dbReference>
<dbReference type="GeneID" id="230233"/>
<dbReference type="KEGG" id="mmu:230233"/>
<dbReference type="UCSC" id="uc012del.1">
    <property type="organism name" value="mouse"/>
</dbReference>
<dbReference type="AGR" id="MGI:1914544"/>
<dbReference type="CTD" id="8518"/>
<dbReference type="MGI" id="MGI:1914544">
    <property type="gene designation" value="Elp1"/>
</dbReference>
<dbReference type="VEuPathDB" id="HostDB:ENSMUSG00000028431"/>
<dbReference type="eggNOG" id="KOG1920">
    <property type="taxonomic scope" value="Eukaryota"/>
</dbReference>
<dbReference type="GeneTree" id="ENSGT00390000013344"/>
<dbReference type="HOGENOM" id="CLU_001477_1_0_1"/>
<dbReference type="InParanoid" id="Q7TT37"/>
<dbReference type="OMA" id="WRESLYC"/>
<dbReference type="OrthoDB" id="40048at2759"/>
<dbReference type="PhylomeDB" id="Q7TT37"/>
<dbReference type="TreeFam" id="TF300402"/>
<dbReference type="UniPathway" id="UPA00988"/>
<dbReference type="BioGRID-ORCS" id="230233">
    <property type="hits" value="27 hits in 81 CRISPR screens"/>
</dbReference>
<dbReference type="ChiTaRS" id="Epb41">
    <property type="organism name" value="mouse"/>
</dbReference>
<dbReference type="PRO" id="PR:Q7TT37"/>
<dbReference type="Proteomes" id="UP000000589">
    <property type="component" value="Chromosome 4"/>
</dbReference>
<dbReference type="RNAct" id="Q7TT37">
    <property type="molecule type" value="protein"/>
</dbReference>
<dbReference type="Bgee" id="ENSMUSG00000028431">
    <property type="expression patterns" value="Expressed in pharyngeal arch 2 and 252 other cell types or tissues"/>
</dbReference>
<dbReference type="GO" id="GO:0005737">
    <property type="term" value="C:cytoplasm"/>
    <property type="evidence" value="ECO:0000314"/>
    <property type="project" value="UniProtKB"/>
</dbReference>
<dbReference type="GO" id="GO:0005829">
    <property type="term" value="C:cytosol"/>
    <property type="evidence" value="ECO:0007669"/>
    <property type="project" value="Ensembl"/>
</dbReference>
<dbReference type="GO" id="GO:0033588">
    <property type="term" value="C:elongator holoenzyme complex"/>
    <property type="evidence" value="ECO:0000250"/>
    <property type="project" value="UniProtKB"/>
</dbReference>
<dbReference type="GO" id="GO:0005634">
    <property type="term" value="C:nucleus"/>
    <property type="evidence" value="ECO:0007669"/>
    <property type="project" value="UniProtKB-SubCell"/>
</dbReference>
<dbReference type="GO" id="GO:0002098">
    <property type="term" value="P:tRNA wobble uridine modification"/>
    <property type="evidence" value="ECO:0000315"/>
    <property type="project" value="UniProtKB"/>
</dbReference>
<dbReference type="InterPro" id="IPR056167">
    <property type="entry name" value="A-sol_ELP1"/>
</dbReference>
<dbReference type="InterPro" id="IPR006849">
    <property type="entry name" value="Elp1"/>
</dbReference>
<dbReference type="InterPro" id="IPR056165">
    <property type="entry name" value="ELP1_b-prop_2"/>
</dbReference>
<dbReference type="InterPro" id="IPR056164">
    <property type="entry name" value="ELP1_N_b-prop_1"/>
</dbReference>
<dbReference type="InterPro" id="IPR056169">
    <property type="entry name" value="HB_ELP1"/>
</dbReference>
<dbReference type="InterPro" id="IPR056166">
    <property type="entry name" value="TPR_ELP1"/>
</dbReference>
<dbReference type="PANTHER" id="PTHR12747">
    <property type="entry name" value="ELONGATOR COMPLEX PROTEIN 1"/>
    <property type="match status" value="1"/>
</dbReference>
<dbReference type="PANTHER" id="PTHR12747:SF0">
    <property type="entry name" value="ELONGATOR COMPLEX PROTEIN 1"/>
    <property type="match status" value="1"/>
</dbReference>
<dbReference type="Pfam" id="PF23925">
    <property type="entry name" value="A-sol_ELP1"/>
    <property type="match status" value="1"/>
</dbReference>
<dbReference type="Pfam" id="PF04762">
    <property type="entry name" value="Beta-prop_ELP1_1st"/>
    <property type="match status" value="1"/>
</dbReference>
<dbReference type="Pfam" id="PF23797">
    <property type="entry name" value="Beta-prop_ELP1_2nd"/>
    <property type="match status" value="1"/>
</dbReference>
<dbReference type="Pfam" id="PF23936">
    <property type="entry name" value="HB_ELP1"/>
    <property type="match status" value="1"/>
</dbReference>
<dbReference type="Pfam" id="PF23878">
    <property type="entry name" value="TPR_ELP1"/>
    <property type="match status" value="1"/>
</dbReference>
<dbReference type="PIRSF" id="PIRSF017233">
    <property type="entry name" value="IKAP"/>
    <property type="match status" value="1"/>
</dbReference>
<dbReference type="SUPFAM" id="SSF82171">
    <property type="entry name" value="DPP6 N-terminal domain-like"/>
    <property type="match status" value="1"/>
</dbReference>
<sequence>MRNLKLHRTLEFRDIQAPGKPQCFCLRAEQGTVLIGSERGLTEVDPVRREVKTEISLVAEGFLPEDGSGCIVGIQDLLDQESVCVATASGDVIVCNLSTQQLECVGSVASGISVMSWSPDQELLLLATAQQTLIMMTKDFEVIAEEQIHQDDFGEGKFVTVGWGSKQTQFHGSEGRPTAFPVQLPENALPWDDRRPHITWRGDGQYFAVSVVCRQTEARKIRVWNREFALQSTSESVPGLGPALAWKPSGSLIASTQDKPNQQDVVFFEKNGLLHGHFTLPFLKDEVKVNDLLWNADSSVLAIWLEDLPKEDSSTLKSYVQLWTVGNYHWYLKQSLPFSTTGKNQIVSLLWDPVTPCRLHVLCTGWRYLCCDWHWTTDRSSGNSANDLANVAVIDGNRVLVTVFRQTVVPPPMCTYRLLIPHPVNQVIFSAHLGNDLAVLDASNQISVYKCGDKPNMDSTVKLGAVGGNGFKVPLTTPHLEKRYSIQFGNNEEEEEEEVNALQLSFLTWVEDDTFLAISYSHSSSQSIIHHLTVTHSEVDEEQGQLDVSSSVTVDGVVIGLCCCSKTKSLAVQLADGQVLKYLWESPSLAVEPWKNSEGIPVRFVHPCTQMEVATIGGEECVLGLTDRCRFFINDTEVASNITSFAVCDDFLLVTTHSHTCQVFSLSGASLKMLQAALSGSHEASGEILRKVERGSRIVTVVPQDTKLILQMPRGNLEVVHHRALVLAQIRKWLDKLMFKEAFECMRKLRINLNLIHDHNPKVFLENVETFVKQIDSVNHINLFFTELREEDVTKTMYPPPITKSVQVSTHPDGKKLDLICDAMRAAMEAINPRKFCLSILTSHVKKTTPELEIVLQKVQELQGNLPFDPESVSVEEALKYLLLLVDVNELFNHSLGTYDFNLVLMVAEKSQKDPKEYLPFLNTLKKMETNYQRFTIDKYLKRYEKALGHLSKCGPEYFTECLNLIKDKNLYKEALKLYRPDSPQYQAVSMAYGEHLMQEHLYEPAGLVFARCGAQEKALEAFLACGSWQQALCVAAQLQMSKDKVAGLARTLAGKLVEQRKHSEAATVLEQYAQDYEEAVLLLLEGSAWEEALRLVYKYDRVDIIETSVKPSILEAQKNYMDFLDSETATFIRHKNRLQVVRALRRQAPQVHVDHEVAHGPESDLFSETSSIMSGSEMSGRYSHSNSRISARSSKNRRKAERKKHSLKEGSPLEGLALLEALSEVVQSVEKLKDEVRAILKVLFLFEFEEQAKELQRAFESTLQLMERAVPEIWTPAGQQSSTTPVLGPSSTANSITASYQQQKTCVPALDAGVYMPPKMDPRSQWKLSLLE</sequence>
<feature type="chain" id="PRO_0000283995" description="Elongator complex protein 1">
    <location>
        <begin position="1"/>
        <end position="1333"/>
    </location>
</feature>
<feature type="region of interest" description="Mediates dimerization" evidence="2">
    <location>
        <begin position="886"/>
        <end position="1333"/>
    </location>
</feature>
<feature type="region of interest" description="Disordered" evidence="4">
    <location>
        <begin position="1175"/>
        <end position="1209"/>
    </location>
</feature>
<feature type="region of interest" description="Required for binding to tRNA" evidence="3">
    <location>
        <begin position="1192"/>
        <end position="1210"/>
    </location>
</feature>
<feature type="compositionally biased region" description="Basic residues" evidence="4">
    <location>
        <begin position="1195"/>
        <end position="1207"/>
    </location>
</feature>
<feature type="modified residue" description="Phosphoserine" evidence="2">
    <location>
        <position position="805"/>
    </location>
</feature>
<feature type="modified residue" description="Phosphoserine" evidence="2">
    <location>
        <position position="1172"/>
    </location>
</feature>
<feature type="modified residue" description="Phosphoserine" evidence="2">
    <location>
        <position position="1175"/>
    </location>
</feature>
<feature type="sequence conflict" description="In Ref. 3; AAO15309." evidence="10" ref="3">
    <original>T</original>
    <variation>P</variation>
    <location>
        <position position="42"/>
    </location>
</feature>
<feature type="sequence conflict" description="In Ref. 4; BAE27720." evidence="10" ref="4">
    <original>D</original>
    <variation>G</variation>
    <location>
        <position position="120"/>
    </location>
</feature>
<feature type="sequence conflict" description="In Ref. 3; AAO15309." evidence="10" ref="3">
    <original>QT</original>
    <variation>HS</variation>
    <location>
        <begin position="215"/>
        <end position="216"/>
    </location>
</feature>
<feature type="sequence conflict" description="In Ref. 2; AAL40925." evidence="10" ref="2">
    <original>I</original>
    <variation>V</variation>
    <location>
        <position position="221"/>
    </location>
</feature>
<feature type="sequence conflict" description="In Ref. 2; AAL40925 and 3; AAO15309." evidence="10" ref="2 3">
    <original>I</original>
    <variation>V</variation>
    <location>
        <position position="346"/>
    </location>
</feature>
<feature type="sequence conflict" description="In Ref. 1; AAL36025." evidence="10" ref="1">
    <original>Y</original>
    <variation>I</variation>
    <location>
        <position position="582"/>
    </location>
</feature>
<feature type="sequence conflict" description="In Ref. 1; AAL36025." evidence="10" ref="1">
    <original>ND</original>
    <variation>LV</variation>
    <location>
        <begin position="634"/>
        <end position="635"/>
    </location>
</feature>
<feature type="sequence conflict" description="In Ref. 2; AAL40925." evidence="10" ref="2">
    <original>D</original>
    <variation>A</variation>
    <location>
        <position position="649"/>
    </location>
</feature>
<feature type="sequence conflict" description="In Ref. 1; AAL36025, 2; AAL40925 and 3; AAO15309." evidence="10" ref="1 2 3">
    <original>V</original>
    <variation>G</variation>
    <location>
        <position position="663"/>
    </location>
</feature>
<feature type="sequence conflict" description="In Ref. 1; AAL36025." evidence="10" ref="1">
    <original>ER</original>
    <variation>VW</variation>
    <location>
        <begin position="693"/>
        <end position="694"/>
    </location>
</feature>
<feature type="sequence conflict" description="In Ref. 1; AAL36025." evidence="10" ref="1">
    <original>K</original>
    <variation>F</variation>
    <location>
        <position position="773"/>
    </location>
</feature>
<feature type="sequence conflict" description="In Ref. 1; AAL36025, 2; AAL40925 and 3; AAO15309." evidence="10" ref="1 2 3">
    <original>V</original>
    <variation>I</variation>
    <location>
        <position position="1110"/>
    </location>
</feature>
<feature type="sequence conflict" description="In Ref. 4; BAB23291." evidence="10" ref="4">
    <original>A</original>
    <variation>G</variation>
    <location>
        <position position="1159"/>
    </location>
</feature>
<comment type="function">
    <text evidence="2 3 7">Component of the elongator complex which is required for multiple tRNA modifications, including mcm5U (5-methoxycarbonylmethyl uridine), mcm5s2U (5-methoxycarbonylmethyl-2-thiouridine), and ncm5U (5-carbamoylmethyl uridine) (By similarity). The elongator complex catalyzes the formation of carboxymethyluridine in the wobble base at position 34 in tRNAs (PubMed:23717213). Regulates the migration and branching of projection neurons in the developing cerebral cortex, through a process depending on alpha-tubulin acetylation (PubMed:22854966). ELP1 binds to tRNA, mediating interaction of the elongator complex with tRNA (By similarity). May act as a scaffold protein that assembles active IKK-MAP3K14 complexes (IKKA, IKKB and MAP3K14/NIK) (By similarity).</text>
</comment>
<comment type="pathway">
    <text evidence="2">tRNA modification; 5-methoxycarbonylmethyl-2-thiouridine-tRNA biosynthesis.</text>
</comment>
<comment type="subunit">
    <text evidence="2">Homodimer; dimerization promotes ELP1 stability and elongator complex formation. Component of the elongator complex which consists of ELP1, ELP2, ELP3, ELP4, ELP5 and ELP6. Interacts preferentially with MAP3K14/NIK followed by IKK-alpha and IKK-beta.</text>
</comment>
<comment type="interaction">
    <interactant intactId="EBI-8418161">
        <id>Q7TT37</id>
    </interactant>
    <interactant intactId="EBI-298630">
        <id>P23242</id>
        <label>Gja1</label>
    </interactant>
    <organismsDiffer>false</organismsDiffer>
    <experiments>3</experiments>
</comment>
<comment type="subcellular location">
    <subcellularLocation>
        <location evidence="6 8 9">Cytoplasm</location>
    </subcellularLocation>
    <subcellularLocation>
        <location evidence="2">Nucleus</location>
    </subcellularLocation>
</comment>
<comment type="tissue specificity">
    <text evidence="5 8 9">In the testis, expression is restricted to germ cells during spermatogenesis with no expression detected in somatic cells such as Sertoli cells or Leydig cells (at protein level) (PubMed:23717213). In the ovary, expressed in oocytes of primary, secondary and antral follicles (at protein level) (PubMed:31827135). Widely expressed in adult tissues with highest levels in brain and also expressed at all embryonic stages (PubMed:11747609).</text>
</comment>
<comment type="developmental stage">
    <text evidence="5 8 9">During spermatogenesis, expressed in the testis in all male germ cell stages except elongated spermatids (at protein level) (PubMed:23717213). Highly expressed in fully-grown germinal vesicle oocytes and modest expression throughout the preimplantation stage with a slight down-regulation at the 2-cell stage (PubMed:31827135). In the embryo, expressed at embryonic days 7, 11, 15 and 17 with the highest expression at embryonic day 11 (PubMed:11747609).</text>
</comment>
<comment type="PTM">
    <text evidence="1">Phosphorylated.</text>
</comment>
<comment type="disruption phenotype">
    <text evidence="8 9">Conditional knockout in male germ cells results in defects in wobble uridine tRNA modification and defects in synapsis and meiotic recombination which result in increased apoptosis and complete arrest of gametogenesis, leading to male infertility (PubMed:23717213). Conditional knockout in female germ cells results in female subfertility with reduced litter size although ovaries are morphologically and histologically indistinguishable from those of controls (PubMed:31827135). Oocytes show aneuploidy, reduced alpha-tubulin acetylation and are unable to complete meiosis with defects in meiotic spindle organization, chromosome alignment and kinetochore function (PubMed:31827135). Embryos derived from Elp1-deficient oocytes exhibit digyny, progressive delays in preimplantation development and severe degeneration before reaching the blastocyst stage (PubMed:31827135).</text>
</comment>
<comment type="similarity">
    <text evidence="10">Belongs to the ELP1/IKA1 family.</text>
</comment>
<comment type="caution">
    <text evidence="2">The elongator complex was originally thought to play a role in transcription elongation. However, it is no longer thought to play a direct role in this process and its primary function is thought to be in tRNA modification.</text>
</comment>
<comment type="sequence caution" evidence="10">
    <conflict type="frameshift">
        <sequence resource="EMBL-CDS" id="AAL36025"/>
    </conflict>
</comment>
<comment type="sequence caution" evidence="10">
    <conflict type="frameshift">
        <sequence resource="EMBL-CDS" id="AAO15309"/>
    </conflict>
</comment>
<organism>
    <name type="scientific">Mus musculus</name>
    <name type="common">Mouse</name>
    <dbReference type="NCBI Taxonomy" id="10090"/>
    <lineage>
        <taxon>Eukaryota</taxon>
        <taxon>Metazoa</taxon>
        <taxon>Chordata</taxon>
        <taxon>Craniata</taxon>
        <taxon>Vertebrata</taxon>
        <taxon>Euteleostomi</taxon>
        <taxon>Mammalia</taxon>
        <taxon>Eutheria</taxon>
        <taxon>Euarchontoglires</taxon>
        <taxon>Glires</taxon>
        <taxon>Rodentia</taxon>
        <taxon>Myomorpha</taxon>
        <taxon>Muroidea</taxon>
        <taxon>Muridae</taxon>
        <taxon>Murinae</taxon>
        <taxon>Mus</taxon>
        <taxon>Mus</taxon>
    </lineage>
</organism>
<accession>Q7TT37</accession>
<accession>Q3UHY6</accession>
<accession>Q7TQH1</accession>
<accession>Q8C6B3</accession>
<accession>Q8CBI3</accession>
<accession>Q8CH82</accession>
<accession>Q8VHU5</accession>
<accession>Q8VHV9</accession>
<accession>Q9CT81</accession>
<keyword id="KW-0002">3D-structure</keyword>
<keyword id="KW-0963">Cytoplasm</keyword>
<keyword id="KW-0539">Nucleus</keyword>
<keyword id="KW-0597">Phosphoprotein</keyword>
<keyword id="KW-1185">Reference proteome</keyword>
<keyword id="KW-0819">tRNA processing</keyword>
<evidence type="ECO:0000250" key="1"/>
<evidence type="ECO:0000250" key="2">
    <source>
        <dbReference type="UniProtKB" id="O95163"/>
    </source>
</evidence>
<evidence type="ECO:0000250" key="3">
    <source>
        <dbReference type="UniProtKB" id="Q06706"/>
    </source>
</evidence>
<evidence type="ECO:0000256" key="4">
    <source>
        <dbReference type="SAM" id="MobiDB-lite"/>
    </source>
</evidence>
<evidence type="ECO:0000269" key="5">
    <source>
    </source>
</evidence>
<evidence type="ECO:0000269" key="6">
    <source>
    </source>
</evidence>
<evidence type="ECO:0000269" key="7">
    <source>
    </source>
</evidence>
<evidence type="ECO:0000269" key="8">
    <source>
    </source>
</evidence>
<evidence type="ECO:0000269" key="9">
    <source>
    </source>
</evidence>
<evidence type="ECO:0000305" key="10"/>
<gene>
    <name type="primary">Elp1</name>
    <name type="synonym">Ikap</name>
    <name type="synonym">Ikbkap</name>
</gene>
<name>ELP1_MOUSE</name>
<reference key="1">
    <citation type="journal article" date="2001" name="DNA Cell Biol.">
        <title>Cloning, characterization, and genomic structure of the mouse Ikbkap gene.</title>
        <authorList>
            <person name="Cuajungco M.P."/>
            <person name="Leyne M."/>
            <person name="Mull J."/>
            <person name="Gill S.P."/>
            <person name="Gusella J.F."/>
            <person name="Slaugenhaupt S.A."/>
        </authorList>
    </citation>
    <scope>NUCLEOTIDE SEQUENCE [MRNA]</scope>
    <scope>DEVELOPMENTAL STAGE</scope>
    <scope>TISSUE SPECIFICITY</scope>
    <source>
        <strain>BALB/cJ</strain>
    </source>
</reference>
<reference key="2">
    <citation type="journal article" date="2001" name="Gene">
        <title>Genomic organization and chromosomal localization of the mouse IKBKAP gene.</title>
        <authorList>
            <person name="Coli R."/>
            <person name="Anderson S.L."/>
            <person name="Volpi S.A."/>
            <person name="Rubin B.Y."/>
        </authorList>
    </citation>
    <scope>NUCLEOTIDE SEQUENCE [MRNA]</scope>
    <source>
        <strain>129/SvJ</strain>
        <tissue>Spleen</tissue>
    </source>
</reference>
<reference key="3">
    <citation type="submission" date="1999-04" db="EMBL/GenBank/DDBJ databases">
        <title>Molecular cloning and biochemical analysis of murine IKAP.</title>
        <authorList>
            <person name="Shirane M."/>
            <person name="Hatakeyama S."/>
            <person name="Nakayama K."/>
        </authorList>
    </citation>
    <scope>NUCLEOTIDE SEQUENCE [MRNA]</scope>
    <source>
        <strain>C57BL/6 X CBA</strain>
    </source>
</reference>
<reference key="4">
    <citation type="journal article" date="2005" name="Science">
        <title>The transcriptional landscape of the mammalian genome.</title>
        <authorList>
            <person name="Carninci P."/>
            <person name="Kasukawa T."/>
            <person name="Katayama S."/>
            <person name="Gough J."/>
            <person name="Frith M.C."/>
            <person name="Maeda N."/>
            <person name="Oyama R."/>
            <person name="Ravasi T."/>
            <person name="Lenhard B."/>
            <person name="Wells C."/>
            <person name="Kodzius R."/>
            <person name="Shimokawa K."/>
            <person name="Bajic V.B."/>
            <person name="Brenner S.E."/>
            <person name="Batalov S."/>
            <person name="Forrest A.R."/>
            <person name="Zavolan M."/>
            <person name="Davis M.J."/>
            <person name="Wilming L.G."/>
            <person name="Aidinis V."/>
            <person name="Allen J.E."/>
            <person name="Ambesi-Impiombato A."/>
            <person name="Apweiler R."/>
            <person name="Aturaliya R.N."/>
            <person name="Bailey T.L."/>
            <person name="Bansal M."/>
            <person name="Baxter L."/>
            <person name="Beisel K.W."/>
            <person name="Bersano T."/>
            <person name="Bono H."/>
            <person name="Chalk A.M."/>
            <person name="Chiu K.P."/>
            <person name="Choudhary V."/>
            <person name="Christoffels A."/>
            <person name="Clutterbuck D.R."/>
            <person name="Crowe M.L."/>
            <person name="Dalla E."/>
            <person name="Dalrymple B.P."/>
            <person name="de Bono B."/>
            <person name="Della Gatta G."/>
            <person name="di Bernardo D."/>
            <person name="Down T."/>
            <person name="Engstrom P."/>
            <person name="Fagiolini M."/>
            <person name="Faulkner G."/>
            <person name="Fletcher C.F."/>
            <person name="Fukushima T."/>
            <person name="Furuno M."/>
            <person name="Futaki S."/>
            <person name="Gariboldi M."/>
            <person name="Georgii-Hemming P."/>
            <person name="Gingeras T.R."/>
            <person name="Gojobori T."/>
            <person name="Green R.E."/>
            <person name="Gustincich S."/>
            <person name="Harbers M."/>
            <person name="Hayashi Y."/>
            <person name="Hensch T.K."/>
            <person name="Hirokawa N."/>
            <person name="Hill D."/>
            <person name="Huminiecki L."/>
            <person name="Iacono M."/>
            <person name="Ikeo K."/>
            <person name="Iwama A."/>
            <person name="Ishikawa T."/>
            <person name="Jakt M."/>
            <person name="Kanapin A."/>
            <person name="Katoh M."/>
            <person name="Kawasawa Y."/>
            <person name="Kelso J."/>
            <person name="Kitamura H."/>
            <person name="Kitano H."/>
            <person name="Kollias G."/>
            <person name="Krishnan S.P."/>
            <person name="Kruger A."/>
            <person name="Kummerfeld S.K."/>
            <person name="Kurochkin I.V."/>
            <person name="Lareau L.F."/>
            <person name="Lazarevic D."/>
            <person name="Lipovich L."/>
            <person name="Liu J."/>
            <person name="Liuni S."/>
            <person name="McWilliam S."/>
            <person name="Madan Babu M."/>
            <person name="Madera M."/>
            <person name="Marchionni L."/>
            <person name="Matsuda H."/>
            <person name="Matsuzawa S."/>
            <person name="Miki H."/>
            <person name="Mignone F."/>
            <person name="Miyake S."/>
            <person name="Morris K."/>
            <person name="Mottagui-Tabar S."/>
            <person name="Mulder N."/>
            <person name="Nakano N."/>
            <person name="Nakauchi H."/>
            <person name="Ng P."/>
            <person name="Nilsson R."/>
            <person name="Nishiguchi S."/>
            <person name="Nishikawa S."/>
            <person name="Nori F."/>
            <person name="Ohara O."/>
            <person name="Okazaki Y."/>
            <person name="Orlando V."/>
            <person name="Pang K.C."/>
            <person name="Pavan W.J."/>
            <person name="Pavesi G."/>
            <person name="Pesole G."/>
            <person name="Petrovsky N."/>
            <person name="Piazza S."/>
            <person name="Reed J."/>
            <person name="Reid J.F."/>
            <person name="Ring B.Z."/>
            <person name="Ringwald M."/>
            <person name="Rost B."/>
            <person name="Ruan Y."/>
            <person name="Salzberg S.L."/>
            <person name="Sandelin A."/>
            <person name="Schneider C."/>
            <person name="Schoenbach C."/>
            <person name="Sekiguchi K."/>
            <person name="Semple C.A."/>
            <person name="Seno S."/>
            <person name="Sessa L."/>
            <person name="Sheng Y."/>
            <person name="Shibata Y."/>
            <person name="Shimada H."/>
            <person name="Shimada K."/>
            <person name="Silva D."/>
            <person name="Sinclair B."/>
            <person name="Sperling S."/>
            <person name="Stupka E."/>
            <person name="Sugiura K."/>
            <person name="Sultana R."/>
            <person name="Takenaka Y."/>
            <person name="Taki K."/>
            <person name="Tammoja K."/>
            <person name="Tan S.L."/>
            <person name="Tang S."/>
            <person name="Taylor M.S."/>
            <person name="Tegner J."/>
            <person name="Teichmann S.A."/>
            <person name="Ueda H.R."/>
            <person name="van Nimwegen E."/>
            <person name="Verardo R."/>
            <person name="Wei C.L."/>
            <person name="Yagi K."/>
            <person name="Yamanishi H."/>
            <person name="Zabarovsky E."/>
            <person name="Zhu S."/>
            <person name="Zimmer A."/>
            <person name="Hide W."/>
            <person name="Bult C."/>
            <person name="Grimmond S.M."/>
            <person name="Teasdale R.D."/>
            <person name="Liu E.T."/>
            <person name="Brusic V."/>
            <person name="Quackenbush J."/>
            <person name="Wahlestedt C."/>
            <person name="Mattick J.S."/>
            <person name="Hume D.A."/>
            <person name="Kai C."/>
            <person name="Sasaki D."/>
            <person name="Tomaru Y."/>
            <person name="Fukuda S."/>
            <person name="Kanamori-Katayama M."/>
            <person name="Suzuki M."/>
            <person name="Aoki J."/>
            <person name="Arakawa T."/>
            <person name="Iida J."/>
            <person name="Imamura K."/>
            <person name="Itoh M."/>
            <person name="Kato T."/>
            <person name="Kawaji H."/>
            <person name="Kawagashira N."/>
            <person name="Kawashima T."/>
            <person name="Kojima M."/>
            <person name="Kondo S."/>
            <person name="Konno H."/>
            <person name="Nakano K."/>
            <person name="Ninomiya N."/>
            <person name="Nishio T."/>
            <person name="Okada M."/>
            <person name="Plessy C."/>
            <person name="Shibata K."/>
            <person name="Shiraki T."/>
            <person name="Suzuki S."/>
            <person name="Tagami M."/>
            <person name="Waki K."/>
            <person name="Watahiki A."/>
            <person name="Okamura-Oho Y."/>
            <person name="Suzuki H."/>
            <person name="Kawai J."/>
            <person name="Hayashizaki Y."/>
        </authorList>
    </citation>
    <scope>NUCLEOTIDE SEQUENCE [LARGE SCALE MRNA]</scope>
    <source>
        <strain>C57BL/6J</strain>
        <tissue>Cerebellum</tissue>
        <tissue>Head</tissue>
    </source>
</reference>
<reference key="5">
    <citation type="journal article" date="2009" name="PLoS Biol.">
        <title>Lineage-specific biology revealed by a finished genome assembly of the mouse.</title>
        <authorList>
            <person name="Church D.M."/>
            <person name="Goodstadt L."/>
            <person name="Hillier L.W."/>
            <person name="Zody M.C."/>
            <person name="Goldstein S."/>
            <person name="She X."/>
            <person name="Bult C.J."/>
            <person name="Agarwala R."/>
            <person name="Cherry J.L."/>
            <person name="DiCuccio M."/>
            <person name="Hlavina W."/>
            <person name="Kapustin Y."/>
            <person name="Meric P."/>
            <person name="Maglott D."/>
            <person name="Birtle Z."/>
            <person name="Marques A.C."/>
            <person name="Graves T."/>
            <person name="Zhou S."/>
            <person name="Teague B."/>
            <person name="Potamousis K."/>
            <person name="Churas C."/>
            <person name="Place M."/>
            <person name="Herschleb J."/>
            <person name="Runnheim R."/>
            <person name="Forrest D."/>
            <person name="Amos-Landgraf J."/>
            <person name="Schwartz D.C."/>
            <person name="Cheng Z."/>
            <person name="Lindblad-Toh K."/>
            <person name="Eichler E.E."/>
            <person name="Ponting C.P."/>
        </authorList>
    </citation>
    <scope>NUCLEOTIDE SEQUENCE [LARGE SCALE GENOMIC DNA]</scope>
    <source>
        <strain>C57BL/6J</strain>
    </source>
</reference>
<reference key="6">
    <citation type="journal article" date="2004" name="Genome Res.">
        <title>The status, quality, and expansion of the NIH full-length cDNA project: the Mammalian Gene Collection (MGC).</title>
        <authorList>
            <consortium name="The MGC Project Team"/>
        </authorList>
    </citation>
    <scope>NUCLEOTIDE SEQUENCE [LARGE SCALE MRNA]</scope>
    <source>
        <strain>C57BL/6J</strain>
        <tissue>Brain</tissue>
        <tissue>Eye</tissue>
    </source>
</reference>
<reference key="7">
    <citation type="journal article" date="2009" name="Cell">
        <title>Elongator controls the migration and differentiation of cortical neurons through acetylation of alpha-tubulin.</title>
        <authorList>
            <person name="Creppe C."/>
            <person name="Malinouskaya L."/>
            <person name="Volvert M.L."/>
            <person name="Gillard M."/>
            <person name="Close P."/>
            <person name="Malaise O."/>
            <person name="Laguesse S."/>
            <person name="Cornez I."/>
            <person name="Rahmouni S."/>
            <person name="Ormenese S."/>
            <person name="Belachew S."/>
            <person name="Malgrange B."/>
            <person name="Chapelle J.P."/>
            <person name="Siebenlist U."/>
            <person name="Moonen G."/>
            <person name="Chariot A."/>
            <person name="Nguyen L."/>
        </authorList>
    </citation>
    <scope>FUNCTION IN NEUROGENESIS</scope>
    <scope>SUBCELLULAR LOCATION</scope>
</reference>
<reference key="8">
    <citation type="journal article" date="2010" name="Cell">
        <title>A tissue-specific atlas of mouse protein phosphorylation and expression.</title>
        <authorList>
            <person name="Huttlin E.L."/>
            <person name="Jedrychowski M.P."/>
            <person name="Elias J.E."/>
            <person name="Goswami T."/>
            <person name="Rad R."/>
            <person name="Beausoleil S.A."/>
            <person name="Villen J."/>
            <person name="Haas W."/>
            <person name="Sowa M.E."/>
            <person name="Gygi S.P."/>
        </authorList>
    </citation>
    <scope>IDENTIFICATION BY MASS SPECTROMETRY [LARGE SCALE ANALYSIS]</scope>
    <source>
        <tissue>Brain</tissue>
        <tissue>Brown adipose tissue</tissue>
        <tissue>Heart</tissue>
        <tissue>Kidney</tissue>
        <tissue>Liver</tissue>
        <tissue>Lung</tissue>
        <tissue>Pancreas</tissue>
        <tissue>Spleen</tissue>
        <tissue>Testis</tissue>
    </source>
</reference>
<reference key="9">
    <citation type="journal article" date="2012" name="J. Biol. Chem.">
        <title>DERP6 (ELP5) and C3ORF75 (ELP6) regulate tumorigenicity and migration of melanoma cells as subunits of Elongator.</title>
        <authorList>
            <person name="Close P."/>
            <person name="Gillard M."/>
            <person name="Ladang A."/>
            <person name="Jiang Z."/>
            <person name="Papuga J."/>
            <person name="Hawkes N."/>
            <person name="Nguyen L."/>
            <person name="Chapelle J.P."/>
            <person name="Bouillenne F."/>
            <person name="Svejstrup J."/>
            <person name="Fillet M."/>
            <person name="Chariot A."/>
        </authorList>
    </citation>
    <scope>FUNCTION</scope>
</reference>
<reference key="10">
    <citation type="journal article" date="2013" name="PLoS Genet.">
        <title>Ikbkap/Elp1 deficiency causes male infertility by disrupting meiotic progression.</title>
        <authorList>
            <person name="Lin F.J."/>
            <person name="Shen L."/>
            <person name="Jang C.W."/>
            <person name="Falnes P.O."/>
            <person name="Zhang Y."/>
        </authorList>
    </citation>
    <scope>FUNCTION</scope>
    <scope>SUBCELLULAR LOCATION</scope>
    <scope>TISSUE SPECIFICITY</scope>
    <scope>DEVELOPMENTAL STAGE</scope>
    <scope>DISRUPTION PHENOTYPE</scope>
</reference>
<reference key="11">
    <citation type="journal article" date="2019" name="Sci. Rep.">
        <title>Loss of Ikbkap/Elp1 in mouse oocytes causes spindle disorganization, developmental defects in preimplantation embryos and impaired female fertility.</title>
        <authorList>
            <person name="Yang K.T."/>
            <person name="Inoue A."/>
            <person name="Lee Y.J."/>
            <person name="Jiang C.L."/>
            <person name="Lin F.J."/>
        </authorList>
    </citation>
    <scope>SUBCELLULAR LOCATION</scope>
    <scope>TISSUE SPECIFICITY</scope>
    <scope>DEVELOPMENTAL STAGE</scope>
    <scope>DISRUPTION PHENOTYPE</scope>
</reference>